<organism>
    <name type="scientific">Streptococcus pyogenes serotype M6 (strain ATCC BAA-946 / MGAS10394)</name>
    <dbReference type="NCBI Taxonomy" id="286636"/>
    <lineage>
        <taxon>Bacteria</taxon>
        <taxon>Bacillati</taxon>
        <taxon>Bacillota</taxon>
        <taxon>Bacilli</taxon>
        <taxon>Lactobacillales</taxon>
        <taxon>Streptococcaceae</taxon>
        <taxon>Streptococcus</taxon>
    </lineage>
</organism>
<protein>
    <recommendedName>
        <fullName evidence="1">Large ribosomal subunit protein uL5</fullName>
    </recommendedName>
    <alternativeName>
        <fullName evidence="2">50S ribosomal protein L5</fullName>
    </alternativeName>
</protein>
<accession>Q5XEC3</accession>
<dbReference type="EMBL" id="CP000003">
    <property type="protein sequence ID" value="AAT86240.1"/>
    <property type="molecule type" value="Genomic_DNA"/>
</dbReference>
<dbReference type="RefSeq" id="WP_002986634.1">
    <property type="nucleotide sequence ID" value="NC_006086.1"/>
</dbReference>
<dbReference type="SMR" id="Q5XEC3"/>
<dbReference type="GeneID" id="69900038"/>
<dbReference type="KEGG" id="spa:M6_Spy0105"/>
<dbReference type="HOGENOM" id="CLU_061015_2_1_9"/>
<dbReference type="Proteomes" id="UP000001167">
    <property type="component" value="Chromosome"/>
</dbReference>
<dbReference type="GO" id="GO:1990904">
    <property type="term" value="C:ribonucleoprotein complex"/>
    <property type="evidence" value="ECO:0007669"/>
    <property type="project" value="UniProtKB-KW"/>
</dbReference>
<dbReference type="GO" id="GO:0005840">
    <property type="term" value="C:ribosome"/>
    <property type="evidence" value="ECO:0007669"/>
    <property type="project" value="UniProtKB-KW"/>
</dbReference>
<dbReference type="GO" id="GO:0019843">
    <property type="term" value="F:rRNA binding"/>
    <property type="evidence" value="ECO:0007669"/>
    <property type="project" value="UniProtKB-UniRule"/>
</dbReference>
<dbReference type="GO" id="GO:0003735">
    <property type="term" value="F:structural constituent of ribosome"/>
    <property type="evidence" value="ECO:0007669"/>
    <property type="project" value="InterPro"/>
</dbReference>
<dbReference type="GO" id="GO:0000049">
    <property type="term" value="F:tRNA binding"/>
    <property type="evidence" value="ECO:0007669"/>
    <property type="project" value="UniProtKB-UniRule"/>
</dbReference>
<dbReference type="GO" id="GO:0006412">
    <property type="term" value="P:translation"/>
    <property type="evidence" value="ECO:0007669"/>
    <property type="project" value="UniProtKB-UniRule"/>
</dbReference>
<dbReference type="FunFam" id="3.30.1440.10:FF:000001">
    <property type="entry name" value="50S ribosomal protein L5"/>
    <property type="match status" value="1"/>
</dbReference>
<dbReference type="Gene3D" id="3.30.1440.10">
    <property type="match status" value="1"/>
</dbReference>
<dbReference type="HAMAP" id="MF_01333_B">
    <property type="entry name" value="Ribosomal_uL5_B"/>
    <property type="match status" value="1"/>
</dbReference>
<dbReference type="InterPro" id="IPR002132">
    <property type="entry name" value="Ribosomal_uL5"/>
</dbReference>
<dbReference type="InterPro" id="IPR020930">
    <property type="entry name" value="Ribosomal_uL5_bac-type"/>
</dbReference>
<dbReference type="InterPro" id="IPR031309">
    <property type="entry name" value="Ribosomal_uL5_C"/>
</dbReference>
<dbReference type="InterPro" id="IPR020929">
    <property type="entry name" value="Ribosomal_uL5_CS"/>
</dbReference>
<dbReference type="InterPro" id="IPR022803">
    <property type="entry name" value="Ribosomal_uL5_dom_sf"/>
</dbReference>
<dbReference type="InterPro" id="IPR031310">
    <property type="entry name" value="Ribosomal_uL5_N"/>
</dbReference>
<dbReference type="NCBIfam" id="NF000585">
    <property type="entry name" value="PRK00010.1"/>
    <property type="match status" value="1"/>
</dbReference>
<dbReference type="PANTHER" id="PTHR11994">
    <property type="entry name" value="60S RIBOSOMAL PROTEIN L11-RELATED"/>
    <property type="match status" value="1"/>
</dbReference>
<dbReference type="Pfam" id="PF00281">
    <property type="entry name" value="Ribosomal_L5"/>
    <property type="match status" value="1"/>
</dbReference>
<dbReference type="Pfam" id="PF00673">
    <property type="entry name" value="Ribosomal_L5_C"/>
    <property type="match status" value="1"/>
</dbReference>
<dbReference type="PIRSF" id="PIRSF002161">
    <property type="entry name" value="Ribosomal_L5"/>
    <property type="match status" value="1"/>
</dbReference>
<dbReference type="SUPFAM" id="SSF55282">
    <property type="entry name" value="RL5-like"/>
    <property type="match status" value="1"/>
</dbReference>
<dbReference type="PROSITE" id="PS00358">
    <property type="entry name" value="RIBOSOMAL_L5"/>
    <property type="match status" value="1"/>
</dbReference>
<reference key="1">
    <citation type="journal article" date="2004" name="J. Infect. Dis.">
        <title>Progress toward characterization of the group A Streptococcus metagenome: complete genome sequence of a macrolide-resistant serotype M6 strain.</title>
        <authorList>
            <person name="Banks D.J."/>
            <person name="Porcella S.F."/>
            <person name="Barbian K.D."/>
            <person name="Beres S.B."/>
            <person name="Philips L.E."/>
            <person name="Voyich J.M."/>
            <person name="DeLeo F.R."/>
            <person name="Martin J.M."/>
            <person name="Somerville G.A."/>
            <person name="Musser J.M."/>
        </authorList>
    </citation>
    <scope>NUCLEOTIDE SEQUENCE [LARGE SCALE GENOMIC DNA]</scope>
    <source>
        <strain>ATCC BAA-946 / MGAS10394</strain>
    </source>
</reference>
<sequence length="180" mass="19815">MANRLKEKYTNEVIPALTEKFNYTSVMAVPKVEKIVLNMGVGDAVSNAKNLEKAAAELALISGQKPLITKAKKSIAGFRLREGVAIGAKVTLRGERMYEFLDKLVSVSLPRVRDFHGVPTKSFDGRGNYTLGVKEQLIFPEISFDDVDKVRGLDIVIVTTANTDEESRELLKGLGMPFAK</sequence>
<feature type="chain" id="PRO_0000125005" description="Large ribosomal subunit protein uL5">
    <location>
        <begin position="1"/>
        <end position="180"/>
    </location>
</feature>
<comment type="function">
    <text evidence="1">This is one of the proteins that bind and probably mediate the attachment of the 5S RNA into the large ribosomal subunit, where it forms part of the central protuberance. In the 70S ribosome it contacts protein S13 of the 30S subunit (bridge B1b), connecting the 2 subunits; this bridge is implicated in subunit movement. Contacts the P site tRNA; the 5S rRNA and some of its associated proteins might help stabilize positioning of ribosome-bound tRNAs.</text>
</comment>
<comment type="subunit">
    <text evidence="1">Part of the 50S ribosomal subunit; part of the 5S rRNA/L5/L18/L25 subcomplex. Contacts the 5S rRNA and the P site tRNA. Forms a bridge to the 30S subunit in the 70S ribosome.</text>
</comment>
<comment type="similarity">
    <text evidence="1">Belongs to the universal ribosomal protein uL5 family.</text>
</comment>
<gene>
    <name evidence="1" type="primary">rplE</name>
    <name type="ordered locus">M6_Spy0105</name>
</gene>
<evidence type="ECO:0000255" key="1">
    <source>
        <dbReference type="HAMAP-Rule" id="MF_01333"/>
    </source>
</evidence>
<evidence type="ECO:0000305" key="2"/>
<keyword id="KW-0687">Ribonucleoprotein</keyword>
<keyword id="KW-0689">Ribosomal protein</keyword>
<keyword id="KW-0694">RNA-binding</keyword>
<keyword id="KW-0699">rRNA-binding</keyword>
<keyword id="KW-0820">tRNA-binding</keyword>
<name>RL5_STRP6</name>
<proteinExistence type="inferred from homology"/>